<feature type="chain" id="PRO_1000138390" description="Flap endonuclease Xni">
    <location>
        <begin position="1"/>
        <end position="251"/>
    </location>
</feature>
<feature type="domain" description="5'-3' exonuclease" evidence="1">
    <location>
        <begin position="160"/>
        <end position="249"/>
    </location>
</feature>
<feature type="region of interest" description="Interaction with DNA" evidence="1">
    <location>
        <begin position="184"/>
        <end position="189"/>
    </location>
</feature>
<feature type="binding site" evidence="1">
    <location>
        <position position="104"/>
    </location>
    <ligand>
        <name>Mg(2+)</name>
        <dbReference type="ChEBI" id="CHEBI:18420"/>
    </ligand>
</feature>
<feature type="binding site" evidence="1">
    <location>
        <position position="171"/>
    </location>
    <ligand>
        <name>K(+)</name>
        <dbReference type="ChEBI" id="CHEBI:29103"/>
    </ligand>
</feature>
<feature type="binding site" evidence="1">
    <location>
        <position position="172"/>
    </location>
    <ligand>
        <name>K(+)</name>
        <dbReference type="ChEBI" id="CHEBI:29103"/>
    </ligand>
</feature>
<feature type="binding site" evidence="1">
    <location>
        <position position="180"/>
    </location>
    <ligand>
        <name>K(+)</name>
        <dbReference type="ChEBI" id="CHEBI:29103"/>
    </ligand>
</feature>
<feature type="binding site" evidence="1">
    <location>
        <position position="182"/>
    </location>
    <ligand>
        <name>K(+)</name>
        <dbReference type="ChEBI" id="CHEBI:29103"/>
    </ligand>
</feature>
<feature type="binding site" evidence="1">
    <location>
        <position position="185"/>
    </location>
    <ligand>
        <name>K(+)</name>
        <dbReference type="ChEBI" id="CHEBI:29103"/>
    </ligand>
</feature>
<organism>
    <name type="scientific">Salmonella heidelberg (strain SL476)</name>
    <dbReference type="NCBI Taxonomy" id="454169"/>
    <lineage>
        <taxon>Bacteria</taxon>
        <taxon>Pseudomonadati</taxon>
        <taxon>Pseudomonadota</taxon>
        <taxon>Gammaproteobacteria</taxon>
        <taxon>Enterobacterales</taxon>
        <taxon>Enterobacteriaceae</taxon>
        <taxon>Salmonella</taxon>
    </lineage>
</organism>
<accession>B4TGM7</accession>
<comment type="function">
    <text evidence="1">Has flap endonuclease activity. During DNA replication, flap endonucleases cleave the 5'-overhanging flap structure that is generated by displacement synthesis when DNA polymerase encounters the 5'-end of a downstream Okazaki fragment.</text>
</comment>
<comment type="cofactor">
    <cofactor evidence="1">
        <name>Mg(2+)</name>
        <dbReference type="ChEBI" id="CHEBI:18420"/>
    </cofactor>
    <text evidence="1">Binds 2 Mg(2+) per subunit. Only one magnesium ion has a direct interaction with the protein, the other interactions are indirect.</text>
</comment>
<comment type="cofactor">
    <cofactor evidence="1">
        <name>K(+)</name>
        <dbReference type="ChEBI" id="CHEBI:29103"/>
    </cofactor>
    <text evidence="1">Binds 1 K(+) per subunit. The potassium ion strongly increases the affinity for DNA.</text>
</comment>
<comment type="similarity">
    <text evidence="1">Belongs to the Xni family.</text>
</comment>
<gene>
    <name evidence="1" type="primary">xni</name>
    <name evidence="1" type="synonym">ygdG</name>
    <name type="ordered locus">SeHA_C3180</name>
</gene>
<dbReference type="EC" id="3.1.-.-" evidence="1"/>
<dbReference type="EMBL" id="CP001120">
    <property type="protein sequence ID" value="ACF66199.1"/>
    <property type="molecule type" value="Genomic_DNA"/>
</dbReference>
<dbReference type="RefSeq" id="WP_001531816.1">
    <property type="nucleotide sequence ID" value="NC_011083.1"/>
</dbReference>
<dbReference type="SMR" id="B4TGM7"/>
<dbReference type="KEGG" id="seh:SeHA_C3180"/>
<dbReference type="HOGENOM" id="CLU_004675_1_2_6"/>
<dbReference type="Proteomes" id="UP000001866">
    <property type="component" value="Chromosome"/>
</dbReference>
<dbReference type="GO" id="GO:0008409">
    <property type="term" value="F:5'-3' exonuclease activity"/>
    <property type="evidence" value="ECO:0007669"/>
    <property type="project" value="InterPro"/>
</dbReference>
<dbReference type="GO" id="GO:0017108">
    <property type="term" value="F:5'-flap endonuclease activity"/>
    <property type="evidence" value="ECO:0007669"/>
    <property type="project" value="UniProtKB-UniRule"/>
</dbReference>
<dbReference type="GO" id="GO:0003677">
    <property type="term" value="F:DNA binding"/>
    <property type="evidence" value="ECO:0007669"/>
    <property type="project" value="UniProtKB-UniRule"/>
</dbReference>
<dbReference type="GO" id="GO:0000287">
    <property type="term" value="F:magnesium ion binding"/>
    <property type="evidence" value="ECO:0007669"/>
    <property type="project" value="UniProtKB-UniRule"/>
</dbReference>
<dbReference type="GO" id="GO:0030955">
    <property type="term" value="F:potassium ion binding"/>
    <property type="evidence" value="ECO:0007669"/>
    <property type="project" value="UniProtKB-UniRule"/>
</dbReference>
<dbReference type="GO" id="GO:0033567">
    <property type="term" value="P:DNA replication, Okazaki fragment processing"/>
    <property type="evidence" value="ECO:0007669"/>
    <property type="project" value="UniProtKB-UniRule"/>
</dbReference>
<dbReference type="CDD" id="cd09898">
    <property type="entry name" value="H3TH_53EXO"/>
    <property type="match status" value="1"/>
</dbReference>
<dbReference type="CDD" id="cd09859">
    <property type="entry name" value="PIN_53EXO"/>
    <property type="match status" value="1"/>
</dbReference>
<dbReference type="FunFam" id="1.10.150.20:FF:000003">
    <property type="entry name" value="DNA polymerase I"/>
    <property type="match status" value="1"/>
</dbReference>
<dbReference type="FunFam" id="3.40.50.1010:FF:000011">
    <property type="entry name" value="Flap endonuclease Xni"/>
    <property type="match status" value="1"/>
</dbReference>
<dbReference type="Gene3D" id="1.10.150.20">
    <property type="entry name" value="5' to 3' exonuclease, C-terminal subdomain"/>
    <property type="match status" value="1"/>
</dbReference>
<dbReference type="Gene3D" id="3.40.50.1010">
    <property type="entry name" value="5'-nuclease"/>
    <property type="match status" value="1"/>
</dbReference>
<dbReference type="HAMAP" id="MF_01192">
    <property type="entry name" value="Xni"/>
    <property type="match status" value="1"/>
</dbReference>
<dbReference type="InterPro" id="IPR020046">
    <property type="entry name" value="5-3_exonucl_a-hlix_arch_N"/>
</dbReference>
<dbReference type="InterPro" id="IPR002421">
    <property type="entry name" value="5-3_exonuclease"/>
</dbReference>
<dbReference type="InterPro" id="IPR036279">
    <property type="entry name" value="5-3_exonuclease_C_sf"/>
</dbReference>
<dbReference type="InterPro" id="IPR020045">
    <property type="entry name" value="DNA_polI_H3TH"/>
</dbReference>
<dbReference type="InterPro" id="IPR038969">
    <property type="entry name" value="FEN"/>
</dbReference>
<dbReference type="InterPro" id="IPR008918">
    <property type="entry name" value="HhH2"/>
</dbReference>
<dbReference type="InterPro" id="IPR029060">
    <property type="entry name" value="PIN-like_dom_sf"/>
</dbReference>
<dbReference type="InterPro" id="IPR022895">
    <property type="entry name" value="Xni"/>
</dbReference>
<dbReference type="NCBIfam" id="NF007017">
    <property type="entry name" value="PRK09482.1"/>
    <property type="match status" value="1"/>
</dbReference>
<dbReference type="PANTHER" id="PTHR42646:SF2">
    <property type="entry name" value="5'-3' EXONUCLEASE FAMILY PROTEIN"/>
    <property type="match status" value="1"/>
</dbReference>
<dbReference type="PANTHER" id="PTHR42646">
    <property type="entry name" value="FLAP ENDONUCLEASE XNI"/>
    <property type="match status" value="1"/>
</dbReference>
<dbReference type="Pfam" id="PF01367">
    <property type="entry name" value="5_3_exonuc"/>
    <property type="match status" value="1"/>
</dbReference>
<dbReference type="Pfam" id="PF02739">
    <property type="entry name" value="5_3_exonuc_N"/>
    <property type="match status" value="1"/>
</dbReference>
<dbReference type="SMART" id="SM00475">
    <property type="entry name" value="53EXOc"/>
    <property type="match status" value="1"/>
</dbReference>
<dbReference type="SMART" id="SM00279">
    <property type="entry name" value="HhH2"/>
    <property type="match status" value="1"/>
</dbReference>
<dbReference type="SUPFAM" id="SSF47807">
    <property type="entry name" value="5' to 3' exonuclease, C-terminal subdomain"/>
    <property type="match status" value="1"/>
</dbReference>
<dbReference type="SUPFAM" id="SSF88723">
    <property type="entry name" value="PIN domain-like"/>
    <property type="match status" value="1"/>
</dbReference>
<sequence>MAAHLLIVDALNLIRRIHAVQGTPCVETCQHALDQLIIHSQPTHAVAVFDDDARSSGWRHQRLPDYKAGRPPMPDDLHNEMPALRAAFEQRGVRCWASDGNEADDLAATLALKVTEAGHQATIVSTDKGYCQLLSPGLRIRDYFQKRWLDAPFIEKEFGVLPRQLPDYWGLAGISSSKVPGVAGIGPKSATQLLIQFQNLEGIYAHLDEVPEKWRKKLETHKEMAFLCRDIARLQTDLHIDGNLQQLRLAR</sequence>
<protein>
    <recommendedName>
        <fullName evidence="1">Flap endonuclease Xni</fullName>
        <shortName evidence="1">FEN</shortName>
        <ecNumber evidence="1">3.1.-.-</ecNumber>
    </recommendedName>
</protein>
<keyword id="KW-0238">DNA-binding</keyword>
<keyword id="KW-0255">Endonuclease</keyword>
<keyword id="KW-0378">Hydrolase</keyword>
<keyword id="KW-0460">Magnesium</keyword>
<keyword id="KW-0479">Metal-binding</keyword>
<keyword id="KW-0540">Nuclease</keyword>
<keyword id="KW-0630">Potassium</keyword>
<proteinExistence type="inferred from homology"/>
<reference key="1">
    <citation type="journal article" date="2011" name="J. Bacteriol.">
        <title>Comparative genomics of 28 Salmonella enterica isolates: evidence for CRISPR-mediated adaptive sublineage evolution.</title>
        <authorList>
            <person name="Fricke W.F."/>
            <person name="Mammel M.K."/>
            <person name="McDermott P.F."/>
            <person name="Tartera C."/>
            <person name="White D.G."/>
            <person name="Leclerc J.E."/>
            <person name="Ravel J."/>
            <person name="Cebula T.A."/>
        </authorList>
    </citation>
    <scope>NUCLEOTIDE SEQUENCE [LARGE SCALE GENOMIC DNA]</scope>
    <source>
        <strain>SL476</strain>
    </source>
</reference>
<name>XNI_SALHS</name>
<evidence type="ECO:0000255" key="1">
    <source>
        <dbReference type="HAMAP-Rule" id="MF_01192"/>
    </source>
</evidence>